<dbReference type="EC" id="4.2.3.199" evidence="2"/>
<dbReference type="EMBL" id="KY432513">
    <property type="protein sequence ID" value="ARM19968.1"/>
    <property type="molecule type" value="mRNA"/>
</dbReference>
<dbReference type="SMR" id="A0A1W6GW06"/>
<dbReference type="KEGG" id="ag:ARM19968"/>
<dbReference type="BRENDA" id="4.2.3.199">
    <property type="organism ID" value="9850"/>
</dbReference>
<dbReference type="SABIO-RK" id="A0A1W6GW06"/>
<dbReference type="UniPathway" id="UPA00213"/>
<dbReference type="GO" id="GO:0000287">
    <property type="term" value="F:magnesium ion binding"/>
    <property type="evidence" value="ECO:0007669"/>
    <property type="project" value="InterPro"/>
</dbReference>
<dbReference type="GO" id="GO:0010333">
    <property type="term" value="F:terpene synthase activity"/>
    <property type="evidence" value="ECO:0000314"/>
    <property type="project" value="UniProtKB"/>
</dbReference>
<dbReference type="GO" id="GO:0016102">
    <property type="term" value="P:diterpenoid biosynthetic process"/>
    <property type="evidence" value="ECO:0007669"/>
    <property type="project" value="InterPro"/>
</dbReference>
<dbReference type="GO" id="GO:0016106">
    <property type="term" value="P:sesquiterpenoid biosynthetic process"/>
    <property type="evidence" value="ECO:0000314"/>
    <property type="project" value="UniProtKB"/>
</dbReference>
<dbReference type="CDD" id="cd00684">
    <property type="entry name" value="Terpene_cyclase_plant_C1"/>
    <property type="match status" value="1"/>
</dbReference>
<dbReference type="FunFam" id="1.10.600.10:FF:000007">
    <property type="entry name" value="Isoprene synthase, chloroplastic"/>
    <property type="match status" value="1"/>
</dbReference>
<dbReference type="FunFam" id="1.50.10.130:FF:000001">
    <property type="entry name" value="Isoprene synthase, chloroplastic"/>
    <property type="match status" value="1"/>
</dbReference>
<dbReference type="Gene3D" id="1.10.600.10">
    <property type="entry name" value="Farnesyl Diphosphate Synthase"/>
    <property type="match status" value="1"/>
</dbReference>
<dbReference type="Gene3D" id="1.50.10.130">
    <property type="entry name" value="Terpene synthase, N-terminal domain"/>
    <property type="match status" value="1"/>
</dbReference>
<dbReference type="InterPro" id="IPR008949">
    <property type="entry name" value="Isoprenoid_synthase_dom_sf"/>
</dbReference>
<dbReference type="InterPro" id="IPR034741">
    <property type="entry name" value="Terpene_cyclase-like_1_C"/>
</dbReference>
<dbReference type="InterPro" id="IPR044814">
    <property type="entry name" value="Terpene_cyclase_plant_C1"/>
</dbReference>
<dbReference type="InterPro" id="IPR001906">
    <property type="entry name" value="Terpene_synth_N"/>
</dbReference>
<dbReference type="InterPro" id="IPR036965">
    <property type="entry name" value="Terpene_synth_N_sf"/>
</dbReference>
<dbReference type="InterPro" id="IPR050148">
    <property type="entry name" value="Terpene_synthase-like"/>
</dbReference>
<dbReference type="InterPro" id="IPR005630">
    <property type="entry name" value="Terpene_synthase_metal-bd"/>
</dbReference>
<dbReference type="InterPro" id="IPR008930">
    <property type="entry name" value="Terpenoid_cyclase/PrenylTrfase"/>
</dbReference>
<dbReference type="PANTHER" id="PTHR31225:SF93">
    <property type="entry name" value="ALPHA-HUMULENE_(-)-(E)-BETA-CARYOPHYLLENE SYNTHASE"/>
    <property type="match status" value="1"/>
</dbReference>
<dbReference type="PANTHER" id="PTHR31225">
    <property type="entry name" value="OS04G0344100 PROTEIN-RELATED"/>
    <property type="match status" value="1"/>
</dbReference>
<dbReference type="Pfam" id="PF01397">
    <property type="entry name" value="Terpene_synth"/>
    <property type="match status" value="1"/>
</dbReference>
<dbReference type="Pfam" id="PF03936">
    <property type="entry name" value="Terpene_synth_C"/>
    <property type="match status" value="1"/>
</dbReference>
<dbReference type="SFLD" id="SFLDS00005">
    <property type="entry name" value="Isoprenoid_Synthase_Type_I"/>
    <property type="match status" value="1"/>
</dbReference>
<dbReference type="SFLD" id="SFLDG01019">
    <property type="entry name" value="Terpene_Cyclase_Like_1_C_Termi"/>
    <property type="match status" value="1"/>
</dbReference>
<dbReference type="SUPFAM" id="SSF48239">
    <property type="entry name" value="Terpenoid cyclases/Protein prenyltransferases"/>
    <property type="match status" value="1"/>
</dbReference>
<dbReference type="SUPFAM" id="SSF48576">
    <property type="entry name" value="Terpenoid synthases"/>
    <property type="match status" value="1"/>
</dbReference>
<reference key="1">
    <citation type="journal article" date="2017" name="Front. Plant Sci.">
        <title>Identification of a novel (-)-5-epieremophilene synthase from Salvia miltiorrhiza via transcriptome mining.</title>
        <authorList>
            <person name="Fang X."/>
            <person name="Li C.Y."/>
            <person name="Yang Y."/>
            <person name="Cui M.Y."/>
            <person name="Chen X.Y."/>
            <person name="Yang L."/>
        </authorList>
    </citation>
    <scope>NUCLEOTIDE SEQUENCE [MRNA]</scope>
    <scope>FUNCTION</scope>
    <scope>CATALYTIC ACTIVITY</scope>
    <scope>BIOPHYSICOCHEMICAL PROPERTIES</scope>
    <scope>TISSUE SPECIFICITY</scope>
    <scope>INDUCTION</scope>
</reference>
<sequence>MATTQVEIQRPIANFSPSLWGDQFIKNDSGAKAAEKHCKAVEELKKEVMNMITAGGSNLVEAMNLIDTLERLGISYHFEKEIDQKLNHFFNLNTDYSDEFYDLYTVSLHFRLFRQHGHRISSDIFGRWIDESGKFKEGLKTDGKGLLSLYEASYLRTRGETILDDALEFATATLNSIAPHLESPLSKQVVHALIQPLHYGNPRIEAHNFISIYEENQDKNEFLLKFAKLDYNLLQMLHKEELHEVSRWWKELDLVSKLPYARDRVVECFFWAMGVYHEPQYSRARIMLTKTITMTSIIDDTYDAYGVIEELDIFTEAIERWNIEEMDRLPEYVKPFYKALLELYEQFEEELAEEGRSYAAHYAIESLKELVRSYHVEAKWFIQGYLPPFEEYLKNALITCTYCYHTTTSLLGVESAVEEDFQWLAKKPKMLVAGLLICRVIDDIATYEVEKERGQSATGIESYMRDNNATIEEAVAKFFEIATDAWKDINEECLMPSPYSRDVLMRILNLERIIDVTYKGNEDGYTQPEKVLKPHIIALFVDPIKM</sequence>
<accession>A0A1W6GW06</accession>
<gene>
    <name evidence="3" type="primary">STPS2</name>
</gene>
<feature type="chain" id="PRO_0000447713" description="(-)-5-epieremophilene synthase STPS2">
    <location>
        <begin position="1"/>
        <end position="546"/>
    </location>
</feature>
<feature type="short sequence motif" description="DDXXD motif" evidence="4">
    <location>
        <begin position="299"/>
        <end position="303"/>
    </location>
</feature>
<feature type="binding site" evidence="1">
    <location>
        <position position="299"/>
    </location>
    <ligand>
        <name>Mg(2+)</name>
        <dbReference type="ChEBI" id="CHEBI:18420"/>
        <label>1</label>
    </ligand>
</feature>
<feature type="binding site" evidence="1">
    <location>
        <position position="299"/>
    </location>
    <ligand>
        <name>Mg(2+)</name>
        <dbReference type="ChEBI" id="CHEBI:18420"/>
        <label>2</label>
    </ligand>
</feature>
<feature type="binding site" evidence="1">
    <location>
        <position position="303"/>
    </location>
    <ligand>
        <name>Mg(2+)</name>
        <dbReference type="ChEBI" id="CHEBI:18420"/>
        <label>1</label>
    </ligand>
</feature>
<feature type="binding site" evidence="1">
    <location>
        <position position="303"/>
    </location>
    <ligand>
        <name>Mg(2+)</name>
        <dbReference type="ChEBI" id="CHEBI:18420"/>
        <label>2</label>
    </ligand>
</feature>
<feature type="binding site" evidence="1">
    <location>
        <position position="442"/>
    </location>
    <ligand>
        <name>Mg(2+)</name>
        <dbReference type="ChEBI" id="CHEBI:18420"/>
        <label>3</label>
    </ligand>
</feature>
<feature type="binding site" evidence="1">
    <location>
        <position position="446"/>
    </location>
    <ligand>
        <name>Mg(2+)</name>
        <dbReference type="ChEBI" id="CHEBI:18420"/>
        <label>3</label>
    </ligand>
</feature>
<feature type="binding site" evidence="1">
    <location>
        <position position="450"/>
    </location>
    <ligand>
        <name>Mg(2+)</name>
        <dbReference type="ChEBI" id="CHEBI:18420"/>
        <label>3</label>
    </ligand>
</feature>
<protein>
    <recommendedName>
        <fullName>(-)-5-epieremophilene synthase STPS2</fullName>
        <ecNumber evidence="2">4.2.3.199</ecNumber>
    </recommendedName>
    <alternativeName>
        <fullName evidence="3">Sesquiterpene synthase 2</fullName>
        <shortName evidence="3">SmSTPS2</shortName>
    </alternativeName>
</protein>
<proteinExistence type="evidence at protein level"/>
<keyword id="KW-0456">Lyase</keyword>
<keyword id="KW-0460">Magnesium</keyword>
<keyword id="KW-0479">Metal-binding</keyword>
<evidence type="ECO:0000250" key="1">
    <source>
        <dbReference type="UniProtKB" id="Q40577"/>
    </source>
</evidence>
<evidence type="ECO:0000269" key="2">
    <source>
    </source>
</evidence>
<evidence type="ECO:0000303" key="3">
    <source>
    </source>
</evidence>
<evidence type="ECO:0000305" key="4"/>
<name>STPS2_SALMI</name>
<comment type="function">
    <text evidence="2">Sesquiterpene synthase that catalyzes the conversion of farnesyl diphosphate to (-)-5-epi-eremophilene.</text>
</comment>
<comment type="catalytic activity">
    <reaction evidence="2">
        <text>(2E,6E)-farnesyl diphosphate = (-)-5-epi-eremophilene + diphosphate</text>
        <dbReference type="Rhea" id="RHEA:58168"/>
        <dbReference type="ChEBI" id="CHEBI:33019"/>
        <dbReference type="ChEBI" id="CHEBI:142537"/>
        <dbReference type="ChEBI" id="CHEBI:175763"/>
        <dbReference type="EC" id="4.2.3.199"/>
    </reaction>
    <physiologicalReaction direction="left-to-right" evidence="2">
        <dbReference type="Rhea" id="RHEA:58169"/>
    </physiologicalReaction>
</comment>
<comment type="cofactor">
    <cofactor evidence="1">
        <name>Mg(2+)</name>
        <dbReference type="ChEBI" id="CHEBI:18420"/>
    </cofactor>
    <text evidence="1">Binds 3 Mg(2+) ions per subunit.</text>
</comment>
<comment type="biophysicochemical properties">
    <kinetics>
        <KM evidence="2">24.2 uM for farnesyl diphosphate</KM>
        <text evidence="2">kcat is 2.07 sec(-1) with farnesyl diphosphate as substrate.</text>
    </kinetics>
</comment>
<comment type="pathway">
    <text evidence="4">Secondary metabolite biosynthesis; terpenoid biosynthesis.</text>
</comment>
<comment type="subunit">
    <text evidence="1">Monomer.</text>
</comment>
<comment type="tissue specificity">
    <text evidence="2">Highly expressed in leaves (PubMed:28487717). Expressed at levels in flowers (PubMed:28487717).</text>
</comment>
<comment type="induction">
    <text evidence="2">Induced by ethylene and abscisic acid (ABA).</text>
</comment>
<comment type="domain">
    <text evidence="4">The Asp-Asp-Xaa-Xaa-Asp/Glu (DDXXD/E) motif is important for the catalytic activity, presumably through binding to Mg(2+).</text>
</comment>
<comment type="similarity">
    <text evidence="4">Belongs to the terpene synthase family. Tpsa subfamily.</text>
</comment>
<organism>
    <name type="scientific">Salvia miltiorrhiza</name>
    <name type="common">Chinese sage</name>
    <dbReference type="NCBI Taxonomy" id="226208"/>
    <lineage>
        <taxon>Eukaryota</taxon>
        <taxon>Viridiplantae</taxon>
        <taxon>Streptophyta</taxon>
        <taxon>Embryophyta</taxon>
        <taxon>Tracheophyta</taxon>
        <taxon>Spermatophyta</taxon>
        <taxon>Magnoliopsida</taxon>
        <taxon>eudicotyledons</taxon>
        <taxon>Gunneridae</taxon>
        <taxon>Pentapetalae</taxon>
        <taxon>asterids</taxon>
        <taxon>lamiids</taxon>
        <taxon>Lamiales</taxon>
        <taxon>Lamiaceae</taxon>
        <taxon>Nepetoideae</taxon>
        <taxon>Mentheae</taxon>
        <taxon>Salviinae</taxon>
        <taxon>Salvia</taxon>
        <taxon>Salvia incertae sedis</taxon>
    </lineage>
</organism>